<feature type="chain" id="PRO_0000341101" description="D-alanine--D-alanine ligase">
    <location>
        <begin position="1"/>
        <end position="383"/>
    </location>
</feature>
<feature type="domain" description="ATP-grasp" evidence="2">
    <location>
        <begin position="169"/>
        <end position="373"/>
    </location>
</feature>
<feature type="binding site" evidence="2">
    <location>
        <begin position="196"/>
        <end position="251"/>
    </location>
    <ligand>
        <name>ATP</name>
        <dbReference type="ChEBI" id="CHEBI:30616"/>
    </ligand>
</feature>
<feature type="binding site" evidence="2">
    <location>
        <position position="327"/>
    </location>
    <ligand>
        <name>Mg(2+)</name>
        <dbReference type="ChEBI" id="CHEBI:18420"/>
        <label>1</label>
    </ligand>
</feature>
<feature type="binding site" evidence="2">
    <location>
        <position position="340"/>
    </location>
    <ligand>
        <name>Mg(2+)</name>
        <dbReference type="ChEBI" id="CHEBI:18420"/>
        <label>1</label>
    </ligand>
</feature>
<feature type="binding site" evidence="2">
    <location>
        <position position="340"/>
    </location>
    <ligand>
        <name>Mg(2+)</name>
        <dbReference type="ChEBI" id="CHEBI:18420"/>
        <label>2</label>
    </ligand>
</feature>
<feature type="binding site" evidence="2">
    <location>
        <position position="342"/>
    </location>
    <ligand>
        <name>Mg(2+)</name>
        <dbReference type="ChEBI" id="CHEBI:18420"/>
        <label>2</label>
    </ligand>
</feature>
<keyword id="KW-0067">ATP-binding</keyword>
<keyword id="KW-0133">Cell shape</keyword>
<keyword id="KW-0961">Cell wall biogenesis/degradation</keyword>
<keyword id="KW-0963">Cytoplasm</keyword>
<keyword id="KW-0436">Ligase</keyword>
<keyword id="KW-0460">Magnesium</keyword>
<keyword id="KW-0464">Manganese</keyword>
<keyword id="KW-0479">Metal-binding</keyword>
<keyword id="KW-0547">Nucleotide-binding</keyword>
<keyword id="KW-0573">Peptidoglycan synthesis</keyword>
<keyword id="KW-1185">Reference proteome</keyword>
<comment type="function">
    <text evidence="2">Cell wall formation.</text>
</comment>
<comment type="catalytic activity">
    <reaction evidence="2">
        <text>2 D-alanine + ATP = D-alanyl-D-alanine + ADP + phosphate + H(+)</text>
        <dbReference type="Rhea" id="RHEA:11224"/>
        <dbReference type="ChEBI" id="CHEBI:15378"/>
        <dbReference type="ChEBI" id="CHEBI:30616"/>
        <dbReference type="ChEBI" id="CHEBI:43474"/>
        <dbReference type="ChEBI" id="CHEBI:57416"/>
        <dbReference type="ChEBI" id="CHEBI:57822"/>
        <dbReference type="ChEBI" id="CHEBI:456216"/>
        <dbReference type="EC" id="6.3.2.4"/>
    </reaction>
</comment>
<comment type="cofactor">
    <cofactor evidence="1">
        <name>Mg(2+)</name>
        <dbReference type="ChEBI" id="CHEBI:18420"/>
    </cofactor>
    <cofactor evidence="1">
        <name>Mn(2+)</name>
        <dbReference type="ChEBI" id="CHEBI:29035"/>
    </cofactor>
    <text evidence="1">Binds 2 magnesium or manganese ions per subunit.</text>
</comment>
<comment type="pathway">
    <text evidence="2">Cell wall biogenesis; peptidoglycan biosynthesis.</text>
</comment>
<comment type="subcellular location">
    <subcellularLocation>
        <location evidence="2">Cytoplasm</location>
    </subcellularLocation>
</comment>
<comment type="similarity">
    <text evidence="2">Belongs to the D-alanine--D-alanine ligase family.</text>
</comment>
<proteinExistence type="inferred from homology"/>
<evidence type="ECO:0000250" key="1"/>
<evidence type="ECO:0000255" key="2">
    <source>
        <dbReference type="HAMAP-Rule" id="MF_00047"/>
    </source>
</evidence>
<protein>
    <recommendedName>
        <fullName evidence="2">D-alanine--D-alanine ligase</fullName>
        <ecNumber evidence="2">6.3.2.4</ecNumber>
    </recommendedName>
    <alternativeName>
        <fullName evidence="2">D-Ala-D-Ala ligase</fullName>
    </alternativeName>
    <alternativeName>
        <fullName evidence="2">D-alanylalanine synthetase</fullName>
    </alternativeName>
</protein>
<reference key="1">
    <citation type="journal article" date="2007" name="Genome Res.">
        <title>Genome characteristics of facultatively symbiotic Frankia sp. strains reflect host range and host plant biogeography.</title>
        <authorList>
            <person name="Normand P."/>
            <person name="Lapierre P."/>
            <person name="Tisa L.S."/>
            <person name="Gogarten J.P."/>
            <person name="Alloisio N."/>
            <person name="Bagnarol E."/>
            <person name="Bassi C.A."/>
            <person name="Berry A.M."/>
            <person name="Bickhart D.M."/>
            <person name="Choisne N."/>
            <person name="Couloux A."/>
            <person name="Cournoyer B."/>
            <person name="Cruveiller S."/>
            <person name="Daubin V."/>
            <person name="Demange N."/>
            <person name="Francino M.P."/>
            <person name="Goltsman E."/>
            <person name="Huang Y."/>
            <person name="Kopp O.R."/>
            <person name="Labarre L."/>
            <person name="Lapidus A."/>
            <person name="Lavire C."/>
            <person name="Marechal J."/>
            <person name="Martinez M."/>
            <person name="Mastronunzio J.E."/>
            <person name="Mullin B.C."/>
            <person name="Niemann J."/>
            <person name="Pujic P."/>
            <person name="Rawnsley T."/>
            <person name="Rouy Z."/>
            <person name="Schenowitz C."/>
            <person name="Sellstedt A."/>
            <person name="Tavares F."/>
            <person name="Tomkins J.P."/>
            <person name="Vallenet D."/>
            <person name="Valverde C."/>
            <person name="Wall L.G."/>
            <person name="Wang Y."/>
            <person name="Medigue C."/>
            <person name="Benson D.R."/>
        </authorList>
    </citation>
    <scope>NUCLEOTIDE SEQUENCE [LARGE SCALE GENOMIC DNA]</scope>
    <source>
        <strain>DSM 45818 / CECT 9043 / HFP020203 / CcI3</strain>
    </source>
</reference>
<sequence length="383" mass="39975">MAGSRRRIRLALLFGGRSTEHAISCISASGVLRALDRDVYDVVPVGIDTHGRWVVLPDDPTALAVTGDRLPAVVAAHGESVVLAADPTTPGLLPCRPRGGLDSVRNTLGSSDALGSSDIPGDIDVVFPLLHGPFGEDGTVQGLLEMAGLPYVGSGVFASAAAMDKQHMKALLRAAGLPVGSYAVLRAGDTLTGADQERLGLPVFVKPARGGSSIGISRVEAWADLDTAIKAARASDPKVLVESAIVGREIECGVLGILDGPGAEASVPAEITVTSSAGFYDFEAKYMSDATHFDVPANLSHAVREEVRGAAIAAFEALDCAGLARVDMFVTADDHVIINEVNTMPGFTPTSMFPRMWEASGVTYPQLVDRLVRLALRDGAGLR</sequence>
<gene>
    <name evidence="2" type="primary">ddl</name>
    <name type="ordered locus">Francci3_3609</name>
</gene>
<accession>Q2J6Y1</accession>
<name>DDL_FRACC</name>
<organism>
    <name type="scientific">Frankia casuarinae (strain DSM 45818 / CECT 9043 / HFP020203 / CcI3)</name>
    <dbReference type="NCBI Taxonomy" id="106370"/>
    <lineage>
        <taxon>Bacteria</taxon>
        <taxon>Bacillati</taxon>
        <taxon>Actinomycetota</taxon>
        <taxon>Actinomycetes</taxon>
        <taxon>Frankiales</taxon>
        <taxon>Frankiaceae</taxon>
        <taxon>Frankia</taxon>
    </lineage>
</organism>
<dbReference type="EC" id="6.3.2.4" evidence="2"/>
<dbReference type="EMBL" id="CP000249">
    <property type="protein sequence ID" value="ABD12961.1"/>
    <property type="molecule type" value="Genomic_DNA"/>
</dbReference>
<dbReference type="RefSeq" id="WP_011437985.1">
    <property type="nucleotide sequence ID" value="NC_007777.1"/>
</dbReference>
<dbReference type="SMR" id="Q2J6Y1"/>
<dbReference type="STRING" id="106370.Francci3_3609"/>
<dbReference type="KEGG" id="fra:Francci3_3609"/>
<dbReference type="eggNOG" id="COG1181">
    <property type="taxonomic scope" value="Bacteria"/>
</dbReference>
<dbReference type="HOGENOM" id="CLU_039268_0_1_11"/>
<dbReference type="OrthoDB" id="9813261at2"/>
<dbReference type="PhylomeDB" id="Q2J6Y1"/>
<dbReference type="UniPathway" id="UPA00219"/>
<dbReference type="Proteomes" id="UP000001937">
    <property type="component" value="Chromosome"/>
</dbReference>
<dbReference type="GO" id="GO:0005829">
    <property type="term" value="C:cytosol"/>
    <property type="evidence" value="ECO:0007669"/>
    <property type="project" value="TreeGrafter"/>
</dbReference>
<dbReference type="GO" id="GO:0005524">
    <property type="term" value="F:ATP binding"/>
    <property type="evidence" value="ECO:0007669"/>
    <property type="project" value="UniProtKB-KW"/>
</dbReference>
<dbReference type="GO" id="GO:0008716">
    <property type="term" value="F:D-alanine-D-alanine ligase activity"/>
    <property type="evidence" value="ECO:0007669"/>
    <property type="project" value="UniProtKB-UniRule"/>
</dbReference>
<dbReference type="GO" id="GO:0046872">
    <property type="term" value="F:metal ion binding"/>
    <property type="evidence" value="ECO:0007669"/>
    <property type="project" value="UniProtKB-KW"/>
</dbReference>
<dbReference type="GO" id="GO:0071555">
    <property type="term" value="P:cell wall organization"/>
    <property type="evidence" value="ECO:0007669"/>
    <property type="project" value="UniProtKB-KW"/>
</dbReference>
<dbReference type="GO" id="GO:0009252">
    <property type="term" value="P:peptidoglycan biosynthetic process"/>
    <property type="evidence" value="ECO:0007669"/>
    <property type="project" value="UniProtKB-UniRule"/>
</dbReference>
<dbReference type="GO" id="GO:0008360">
    <property type="term" value="P:regulation of cell shape"/>
    <property type="evidence" value="ECO:0007669"/>
    <property type="project" value="UniProtKB-KW"/>
</dbReference>
<dbReference type="FunFam" id="3.30.470.20:FF:000008">
    <property type="entry name" value="D-alanine--D-alanine ligase"/>
    <property type="match status" value="1"/>
</dbReference>
<dbReference type="Gene3D" id="3.40.50.20">
    <property type="match status" value="1"/>
</dbReference>
<dbReference type="Gene3D" id="3.30.1490.20">
    <property type="entry name" value="ATP-grasp fold, A domain"/>
    <property type="match status" value="1"/>
</dbReference>
<dbReference type="Gene3D" id="3.30.470.20">
    <property type="entry name" value="ATP-grasp fold, B domain"/>
    <property type="match status" value="1"/>
</dbReference>
<dbReference type="HAMAP" id="MF_00047">
    <property type="entry name" value="Dala_Dala_lig"/>
    <property type="match status" value="1"/>
</dbReference>
<dbReference type="InterPro" id="IPR011761">
    <property type="entry name" value="ATP-grasp"/>
</dbReference>
<dbReference type="InterPro" id="IPR013815">
    <property type="entry name" value="ATP_grasp_subdomain_1"/>
</dbReference>
<dbReference type="InterPro" id="IPR000291">
    <property type="entry name" value="D-Ala_lig_Van_CS"/>
</dbReference>
<dbReference type="InterPro" id="IPR005905">
    <property type="entry name" value="D_ala_D_ala"/>
</dbReference>
<dbReference type="InterPro" id="IPR011095">
    <property type="entry name" value="Dala_Dala_lig_C"/>
</dbReference>
<dbReference type="InterPro" id="IPR011127">
    <property type="entry name" value="Dala_Dala_lig_N"/>
</dbReference>
<dbReference type="InterPro" id="IPR016185">
    <property type="entry name" value="PreATP-grasp_dom_sf"/>
</dbReference>
<dbReference type="NCBIfam" id="TIGR01205">
    <property type="entry name" value="D_ala_D_alaTIGR"/>
    <property type="match status" value="1"/>
</dbReference>
<dbReference type="NCBIfam" id="NF002378">
    <property type="entry name" value="PRK01372.1"/>
    <property type="match status" value="1"/>
</dbReference>
<dbReference type="NCBIfam" id="NF002528">
    <property type="entry name" value="PRK01966.1-4"/>
    <property type="match status" value="1"/>
</dbReference>
<dbReference type="PANTHER" id="PTHR23132">
    <property type="entry name" value="D-ALANINE--D-ALANINE LIGASE"/>
    <property type="match status" value="1"/>
</dbReference>
<dbReference type="PANTHER" id="PTHR23132:SF25">
    <property type="entry name" value="D-ALANINE--D-ALANINE LIGASE A"/>
    <property type="match status" value="1"/>
</dbReference>
<dbReference type="Pfam" id="PF07478">
    <property type="entry name" value="Dala_Dala_lig_C"/>
    <property type="match status" value="1"/>
</dbReference>
<dbReference type="Pfam" id="PF01820">
    <property type="entry name" value="Dala_Dala_lig_N"/>
    <property type="match status" value="1"/>
</dbReference>
<dbReference type="PIRSF" id="PIRSF039102">
    <property type="entry name" value="Ddl/VanB"/>
    <property type="match status" value="1"/>
</dbReference>
<dbReference type="SUPFAM" id="SSF56059">
    <property type="entry name" value="Glutathione synthetase ATP-binding domain-like"/>
    <property type="match status" value="1"/>
</dbReference>
<dbReference type="SUPFAM" id="SSF52440">
    <property type="entry name" value="PreATP-grasp domain"/>
    <property type="match status" value="1"/>
</dbReference>
<dbReference type="PROSITE" id="PS50975">
    <property type="entry name" value="ATP_GRASP"/>
    <property type="match status" value="1"/>
</dbReference>
<dbReference type="PROSITE" id="PS00843">
    <property type="entry name" value="DALA_DALA_LIGASE_1"/>
    <property type="match status" value="1"/>
</dbReference>
<dbReference type="PROSITE" id="PS00844">
    <property type="entry name" value="DALA_DALA_LIGASE_2"/>
    <property type="match status" value="1"/>
</dbReference>